<organism>
    <name type="scientific">Rippkaea orientalis (strain PCC 8801 / RF-1)</name>
    <name type="common">Cyanothece sp. (strain PCC 8801)</name>
    <dbReference type="NCBI Taxonomy" id="41431"/>
    <lineage>
        <taxon>Bacteria</taxon>
        <taxon>Bacillati</taxon>
        <taxon>Cyanobacteriota</taxon>
        <taxon>Cyanophyceae</taxon>
        <taxon>Oscillatoriophycideae</taxon>
        <taxon>Chroococcales</taxon>
        <taxon>Aphanothecaceae</taxon>
        <taxon>Rippkaea</taxon>
        <taxon>Rippkaea orientalis</taxon>
    </lineage>
</organism>
<accession>B7K231</accession>
<feature type="chain" id="PRO_1000142804" description="Large ribosomal subunit protein uL15">
    <location>
        <begin position="1"/>
        <end position="159"/>
    </location>
</feature>
<feature type="region of interest" description="Disordered" evidence="2">
    <location>
        <begin position="1"/>
        <end position="51"/>
    </location>
</feature>
<feature type="compositionally biased region" description="Basic and acidic residues" evidence="2">
    <location>
        <begin position="1"/>
        <end position="13"/>
    </location>
</feature>
<feature type="compositionally biased region" description="Gly residues" evidence="2">
    <location>
        <begin position="23"/>
        <end position="35"/>
    </location>
</feature>
<comment type="function">
    <text evidence="1">Binds to the 23S rRNA.</text>
</comment>
<comment type="subunit">
    <text evidence="1">Part of the 50S ribosomal subunit.</text>
</comment>
<comment type="similarity">
    <text evidence="1">Belongs to the universal ribosomal protein uL15 family.</text>
</comment>
<dbReference type="EMBL" id="CP001287">
    <property type="protein sequence ID" value="ACK64338.1"/>
    <property type="molecule type" value="Genomic_DNA"/>
</dbReference>
<dbReference type="RefSeq" id="WP_012593615.1">
    <property type="nucleotide sequence ID" value="NC_011726.1"/>
</dbReference>
<dbReference type="SMR" id="B7K231"/>
<dbReference type="STRING" id="41431.PCC8801_0235"/>
<dbReference type="KEGG" id="cyp:PCC8801_0235"/>
<dbReference type="eggNOG" id="COG0200">
    <property type="taxonomic scope" value="Bacteria"/>
</dbReference>
<dbReference type="HOGENOM" id="CLU_055188_4_2_3"/>
<dbReference type="OrthoDB" id="9810293at2"/>
<dbReference type="Proteomes" id="UP000008204">
    <property type="component" value="Chromosome"/>
</dbReference>
<dbReference type="GO" id="GO:0022625">
    <property type="term" value="C:cytosolic large ribosomal subunit"/>
    <property type="evidence" value="ECO:0007669"/>
    <property type="project" value="TreeGrafter"/>
</dbReference>
<dbReference type="GO" id="GO:0019843">
    <property type="term" value="F:rRNA binding"/>
    <property type="evidence" value="ECO:0007669"/>
    <property type="project" value="UniProtKB-UniRule"/>
</dbReference>
<dbReference type="GO" id="GO:0003735">
    <property type="term" value="F:structural constituent of ribosome"/>
    <property type="evidence" value="ECO:0007669"/>
    <property type="project" value="InterPro"/>
</dbReference>
<dbReference type="GO" id="GO:0006412">
    <property type="term" value="P:translation"/>
    <property type="evidence" value="ECO:0007669"/>
    <property type="project" value="UniProtKB-UniRule"/>
</dbReference>
<dbReference type="Gene3D" id="3.100.10.10">
    <property type="match status" value="1"/>
</dbReference>
<dbReference type="HAMAP" id="MF_01341">
    <property type="entry name" value="Ribosomal_uL15"/>
    <property type="match status" value="1"/>
</dbReference>
<dbReference type="InterPro" id="IPR030878">
    <property type="entry name" value="Ribosomal_uL15"/>
</dbReference>
<dbReference type="InterPro" id="IPR021131">
    <property type="entry name" value="Ribosomal_uL15/eL18"/>
</dbReference>
<dbReference type="InterPro" id="IPR036227">
    <property type="entry name" value="Ribosomal_uL15/eL18_sf"/>
</dbReference>
<dbReference type="InterPro" id="IPR005749">
    <property type="entry name" value="Ribosomal_uL15_bac-type"/>
</dbReference>
<dbReference type="InterPro" id="IPR001196">
    <property type="entry name" value="Ribosomal_uL15_CS"/>
</dbReference>
<dbReference type="NCBIfam" id="TIGR01071">
    <property type="entry name" value="rplO_bact"/>
    <property type="match status" value="1"/>
</dbReference>
<dbReference type="PANTHER" id="PTHR12934">
    <property type="entry name" value="50S RIBOSOMAL PROTEIN L15"/>
    <property type="match status" value="1"/>
</dbReference>
<dbReference type="PANTHER" id="PTHR12934:SF11">
    <property type="entry name" value="LARGE RIBOSOMAL SUBUNIT PROTEIN UL15M"/>
    <property type="match status" value="1"/>
</dbReference>
<dbReference type="Pfam" id="PF00828">
    <property type="entry name" value="Ribosomal_L27A"/>
    <property type="match status" value="1"/>
</dbReference>
<dbReference type="SUPFAM" id="SSF52080">
    <property type="entry name" value="Ribosomal proteins L15p and L18e"/>
    <property type="match status" value="1"/>
</dbReference>
<dbReference type="PROSITE" id="PS00475">
    <property type="entry name" value="RIBOSOMAL_L15"/>
    <property type="match status" value="1"/>
</dbReference>
<name>RL15_RIPO1</name>
<proteinExistence type="inferred from homology"/>
<keyword id="KW-1185">Reference proteome</keyword>
<keyword id="KW-0687">Ribonucleoprotein</keyword>
<keyword id="KW-0689">Ribosomal protein</keyword>
<keyword id="KW-0694">RNA-binding</keyword>
<keyword id="KW-0699">rRNA-binding</keyword>
<sequence>MRIHEVTPKEGSTKRRRRVGRGISAGQGASCGFGMRGQKSRSGTGTKAGFEGGQMPLYRRIPKLKHFPLVNPKHYTIINVGKLESLEPNTEVTLESLMEQGIITTNDGPLKVLGDGTLTKALTVKAAAFSKSAQEKIAATGGSWEVLSRKSQQDTEKDE</sequence>
<evidence type="ECO:0000255" key="1">
    <source>
        <dbReference type="HAMAP-Rule" id="MF_01341"/>
    </source>
</evidence>
<evidence type="ECO:0000256" key="2">
    <source>
        <dbReference type="SAM" id="MobiDB-lite"/>
    </source>
</evidence>
<evidence type="ECO:0000305" key="3"/>
<protein>
    <recommendedName>
        <fullName evidence="1">Large ribosomal subunit protein uL15</fullName>
    </recommendedName>
    <alternativeName>
        <fullName evidence="3">50S ribosomal protein L15</fullName>
    </alternativeName>
</protein>
<gene>
    <name evidence="1" type="primary">rplO</name>
    <name type="ordered locus">PCC8801_0235</name>
</gene>
<reference key="1">
    <citation type="journal article" date="2011" name="MBio">
        <title>Novel metabolic attributes of the genus Cyanothece, comprising a group of unicellular nitrogen-fixing Cyanobacteria.</title>
        <authorList>
            <person name="Bandyopadhyay A."/>
            <person name="Elvitigala T."/>
            <person name="Welsh E."/>
            <person name="Stockel J."/>
            <person name="Liberton M."/>
            <person name="Min H."/>
            <person name="Sherman L.A."/>
            <person name="Pakrasi H.B."/>
        </authorList>
    </citation>
    <scope>NUCLEOTIDE SEQUENCE [LARGE SCALE GENOMIC DNA]</scope>
    <source>
        <strain>PCC 8801 / RF-1</strain>
    </source>
</reference>